<protein>
    <recommendedName>
        <fullName evidence="1">Protein NrdI</fullName>
    </recommendedName>
</protein>
<organism>
    <name type="scientific">Rhodococcus jostii (strain RHA1)</name>
    <dbReference type="NCBI Taxonomy" id="101510"/>
    <lineage>
        <taxon>Bacteria</taxon>
        <taxon>Bacillati</taxon>
        <taxon>Actinomycetota</taxon>
        <taxon>Actinomycetes</taxon>
        <taxon>Mycobacteriales</taxon>
        <taxon>Nocardiaceae</taxon>
        <taxon>Rhodococcus</taxon>
    </lineage>
</organism>
<evidence type="ECO:0000255" key="1">
    <source>
        <dbReference type="HAMAP-Rule" id="MF_00128"/>
    </source>
</evidence>
<reference key="1">
    <citation type="journal article" date="2006" name="Proc. Natl. Acad. Sci. U.S.A.">
        <title>The complete genome of Rhodococcus sp. RHA1 provides insights into a catabolic powerhouse.</title>
        <authorList>
            <person name="McLeod M.P."/>
            <person name="Warren R.L."/>
            <person name="Hsiao W.W.L."/>
            <person name="Araki N."/>
            <person name="Myhre M."/>
            <person name="Fernandes C."/>
            <person name="Miyazawa D."/>
            <person name="Wong W."/>
            <person name="Lillquist A.L."/>
            <person name="Wang D."/>
            <person name="Dosanjh M."/>
            <person name="Hara H."/>
            <person name="Petrescu A."/>
            <person name="Morin R.D."/>
            <person name="Yang G."/>
            <person name="Stott J.M."/>
            <person name="Schein J.E."/>
            <person name="Shin H."/>
            <person name="Smailus D."/>
            <person name="Siddiqui A.S."/>
            <person name="Marra M.A."/>
            <person name="Jones S.J.M."/>
            <person name="Holt R."/>
            <person name="Brinkman F.S.L."/>
            <person name="Miyauchi K."/>
            <person name="Fukuda M."/>
            <person name="Davies J.E."/>
            <person name="Mohn W.W."/>
            <person name="Eltis L.D."/>
        </authorList>
    </citation>
    <scope>NUCLEOTIDE SEQUENCE [LARGE SCALE GENOMIC DNA]</scope>
    <source>
        <strain>RHA1</strain>
    </source>
</reference>
<feature type="chain" id="PRO_1000016520" description="Protein NrdI">
    <location>
        <begin position="1"/>
        <end position="158"/>
    </location>
</feature>
<proteinExistence type="inferred from homology"/>
<gene>
    <name evidence="1" type="primary">nrdI</name>
    <name type="ordered locus">RHA1_ro06440</name>
</gene>
<sequence>MTSLVYFSSASENTHRFVQRLGLPATRIPIHDREGTFEVREPYVLIVPTYGGGTTAMGRDTSYVPKPVIRFLNNTHNRSLIRAVIAAGNTNFGESYCFAGNIISQKCHVPYLYRFELMGTAEDVERVRAGLGEFWDHLDDEEHEKWRRPSQTPSTRGA</sequence>
<comment type="function">
    <text evidence="1">Probably involved in ribonucleotide reductase function.</text>
</comment>
<comment type="similarity">
    <text evidence="1">Belongs to the NrdI family.</text>
</comment>
<accession>Q0S2M1</accession>
<dbReference type="EMBL" id="CP000431">
    <property type="protein sequence ID" value="ABG98215.1"/>
    <property type="molecule type" value="Genomic_DNA"/>
</dbReference>
<dbReference type="RefSeq" id="WP_005259574.1">
    <property type="nucleotide sequence ID" value="NC_008268.1"/>
</dbReference>
<dbReference type="SMR" id="Q0S2M1"/>
<dbReference type="KEGG" id="rha:RHA1_ro06440"/>
<dbReference type="eggNOG" id="COG1780">
    <property type="taxonomic scope" value="Bacteria"/>
</dbReference>
<dbReference type="HOGENOM" id="CLU_114845_0_0_11"/>
<dbReference type="OrthoDB" id="350535at2"/>
<dbReference type="Proteomes" id="UP000008710">
    <property type="component" value="Chromosome"/>
</dbReference>
<dbReference type="GO" id="GO:0010181">
    <property type="term" value="F:FMN binding"/>
    <property type="evidence" value="ECO:0007669"/>
    <property type="project" value="InterPro"/>
</dbReference>
<dbReference type="GO" id="GO:0036211">
    <property type="term" value="P:protein modification process"/>
    <property type="evidence" value="ECO:0007669"/>
    <property type="project" value="InterPro"/>
</dbReference>
<dbReference type="Gene3D" id="3.40.50.360">
    <property type="match status" value="1"/>
</dbReference>
<dbReference type="HAMAP" id="MF_00128">
    <property type="entry name" value="NrdI"/>
    <property type="match status" value="1"/>
</dbReference>
<dbReference type="InterPro" id="IPR029039">
    <property type="entry name" value="Flavoprotein-like_sf"/>
</dbReference>
<dbReference type="InterPro" id="IPR020852">
    <property type="entry name" value="RNR_Ib_NrdI_bac"/>
</dbReference>
<dbReference type="InterPro" id="IPR004465">
    <property type="entry name" value="RNR_NrdI"/>
</dbReference>
<dbReference type="NCBIfam" id="TIGR00333">
    <property type="entry name" value="nrdI"/>
    <property type="match status" value="1"/>
</dbReference>
<dbReference type="PANTHER" id="PTHR37297">
    <property type="entry name" value="PROTEIN NRDI"/>
    <property type="match status" value="1"/>
</dbReference>
<dbReference type="PANTHER" id="PTHR37297:SF1">
    <property type="entry name" value="PROTEIN NRDI"/>
    <property type="match status" value="1"/>
</dbReference>
<dbReference type="Pfam" id="PF07972">
    <property type="entry name" value="Flavodoxin_NdrI"/>
    <property type="match status" value="1"/>
</dbReference>
<dbReference type="PIRSF" id="PIRSF005087">
    <property type="entry name" value="NrdI"/>
    <property type="match status" value="1"/>
</dbReference>
<dbReference type="SUPFAM" id="SSF52218">
    <property type="entry name" value="Flavoproteins"/>
    <property type="match status" value="1"/>
</dbReference>
<name>NRDI_RHOJR</name>